<name>RL7_CROS8</name>
<gene>
    <name evidence="1" type="primary">rplL</name>
    <name type="ordered locus">ESA_03692</name>
</gene>
<reference key="1">
    <citation type="journal article" date="2010" name="PLoS ONE">
        <title>Genome sequence of Cronobacter sakazakii BAA-894 and comparative genomic hybridization analysis with other Cronobacter species.</title>
        <authorList>
            <person name="Kucerova E."/>
            <person name="Clifton S.W."/>
            <person name="Xia X.Q."/>
            <person name="Long F."/>
            <person name="Porwollik S."/>
            <person name="Fulton L."/>
            <person name="Fronick C."/>
            <person name="Minx P."/>
            <person name="Kyung K."/>
            <person name="Warren W."/>
            <person name="Fulton R."/>
            <person name="Feng D."/>
            <person name="Wollam A."/>
            <person name="Shah N."/>
            <person name="Bhonagiri V."/>
            <person name="Nash W.E."/>
            <person name="Hallsworth-Pepin K."/>
            <person name="Wilson R.K."/>
            <person name="McClelland M."/>
            <person name="Forsythe S.J."/>
        </authorList>
    </citation>
    <scope>NUCLEOTIDE SEQUENCE [LARGE SCALE GENOMIC DNA]</scope>
    <source>
        <strain>ATCC BAA-894</strain>
    </source>
</reference>
<evidence type="ECO:0000255" key="1">
    <source>
        <dbReference type="HAMAP-Rule" id="MF_00368"/>
    </source>
</evidence>
<evidence type="ECO:0000305" key="2"/>
<dbReference type="EMBL" id="CP000783">
    <property type="protein sequence ID" value="ABU78896.1"/>
    <property type="molecule type" value="Genomic_DNA"/>
</dbReference>
<dbReference type="RefSeq" id="WP_004387079.1">
    <property type="nucleotide sequence ID" value="NC_009778.1"/>
</dbReference>
<dbReference type="SMR" id="A7MQP6"/>
<dbReference type="GeneID" id="56732344"/>
<dbReference type="KEGG" id="esa:ESA_03692"/>
<dbReference type="HOGENOM" id="CLU_086499_3_2_6"/>
<dbReference type="Proteomes" id="UP000000260">
    <property type="component" value="Chromosome"/>
</dbReference>
<dbReference type="GO" id="GO:0022625">
    <property type="term" value="C:cytosolic large ribosomal subunit"/>
    <property type="evidence" value="ECO:0007669"/>
    <property type="project" value="TreeGrafter"/>
</dbReference>
<dbReference type="GO" id="GO:0003729">
    <property type="term" value="F:mRNA binding"/>
    <property type="evidence" value="ECO:0007669"/>
    <property type="project" value="TreeGrafter"/>
</dbReference>
<dbReference type="GO" id="GO:0003735">
    <property type="term" value="F:structural constituent of ribosome"/>
    <property type="evidence" value="ECO:0007669"/>
    <property type="project" value="InterPro"/>
</dbReference>
<dbReference type="GO" id="GO:0006412">
    <property type="term" value="P:translation"/>
    <property type="evidence" value="ECO:0007669"/>
    <property type="project" value="UniProtKB-UniRule"/>
</dbReference>
<dbReference type="CDD" id="cd00387">
    <property type="entry name" value="Ribosomal_L7_L12"/>
    <property type="match status" value="1"/>
</dbReference>
<dbReference type="FunFam" id="1.20.5.710:FF:000001">
    <property type="entry name" value="50S ribosomal protein L7/L12"/>
    <property type="match status" value="1"/>
</dbReference>
<dbReference type="FunFam" id="3.30.1390.10:FF:000001">
    <property type="entry name" value="50S ribosomal protein L7/L12"/>
    <property type="match status" value="1"/>
</dbReference>
<dbReference type="Gene3D" id="3.30.1390.10">
    <property type="match status" value="1"/>
</dbReference>
<dbReference type="Gene3D" id="1.20.5.710">
    <property type="entry name" value="Single helix bin"/>
    <property type="match status" value="1"/>
</dbReference>
<dbReference type="HAMAP" id="MF_00368">
    <property type="entry name" value="Ribosomal_bL12"/>
    <property type="match status" value="1"/>
</dbReference>
<dbReference type="InterPro" id="IPR000206">
    <property type="entry name" value="Ribosomal_bL12"/>
</dbReference>
<dbReference type="InterPro" id="IPR013823">
    <property type="entry name" value="Ribosomal_bL12_C"/>
</dbReference>
<dbReference type="InterPro" id="IPR014719">
    <property type="entry name" value="Ribosomal_bL12_C/ClpS-like"/>
</dbReference>
<dbReference type="InterPro" id="IPR008932">
    <property type="entry name" value="Ribosomal_bL12_oligo"/>
</dbReference>
<dbReference type="InterPro" id="IPR036235">
    <property type="entry name" value="Ribosomal_bL12_oligo_N_sf"/>
</dbReference>
<dbReference type="NCBIfam" id="TIGR00855">
    <property type="entry name" value="L12"/>
    <property type="match status" value="1"/>
</dbReference>
<dbReference type="PANTHER" id="PTHR45987">
    <property type="entry name" value="39S RIBOSOMAL PROTEIN L12"/>
    <property type="match status" value="1"/>
</dbReference>
<dbReference type="PANTHER" id="PTHR45987:SF4">
    <property type="entry name" value="LARGE RIBOSOMAL SUBUNIT PROTEIN BL12M"/>
    <property type="match status" value="1"/>
</dbReference>
<dbReference type="Pfam" id="PF00542">
    <property type="entry name" value="Ribosomal_L12"/>
    <property type="match status" value="1"/>
</dbReference>
<dbReference type="Pfam" id="PF16320">
    <property type="entry name" value="Ribosomal_L12_N"/>
    <property type="match status" value="1"/>
</dbReference>
<dbReference type="SUPFAM" id="SSF54736">
    <property type="entry name" value="ClpS-like"/>
    <property type="match status" value="1"/>
</dbReference>
<dbReference type="SUPFAM" id="SSF48300">
    <property type="entry name" value="Ribosomal protein L7/12, oligomerisation (N-terminal) domain"/>
    <property type="match status" value="1"/>
</dbReference>
<feature type="chain" id="PRO_1000007003" description="Large ribosomal subunit protein bL12">
    <location>
        <begin position="1"/>
        <end position="122"/>
    </location>
</feature>
<sequence>MSITKDQIIEAVSAMSVMDVVELISAMEEKFGVSAAAAVAVAAAGPAEAAEEKTEFDVILKAAGANKVAVIKAVRGATGLGLKEAKDLVESAPAALKEGVSKDDAEALKKSLEEAGAEVEVK</sequence>
<organism>
    <name type="scientific">Cronobacter sakazakii (strain ATCC BAA-894)</name>
    <name type="common">Enterobacter sakazakii</name>
    <dbReference type="NCBI Taxonomy" id="290339"/>
    <lineage>
        <taxon>Bacteria</taxon>
        <taxon>Pseudomonadati</taxon>
        <taxon>Pseudomonadota</taxon>
        <taxon>Gammaproteobacteria</taxon>
        <taxon>Enterobacterales</taxon>
        <taxon>Enterobacteriaceae</taxon>
        <taxon>Cronobacter</taxon>
    </lineage>
</organism>
<protein>
    <recommendedName>
        <fullName evidence="1">Large ribosomal subunit protein bL12</fullName>
    </recommendedName>
    <alternativeName>
        <fullName evidence="2">50S ribosomal protein L7/L12</fullName>
    </alternativeName>
</protein>
<accession>A7MQP6</accession>
<comment type="function">
    <text evidence="1">Forms part of the ribosomal stalk which helps the ribosome interact with GTP-bound translation factors. Is thus essential for accurate translation.</text>
</comment>
<comment type="subunit">
    <text evidence="1">Homodimer. Part of the ribosomal stalk of the 50S ribosomal subunit. Forms a multimeric L10(L12)X complex, where L10 forms an elongated spine to which 2 to 4 L12 dimers bind in a sequential fashion. Binds GTP-bound translation factors.</text>
</comment>
<comment type="similarity">
    <text evidence="1">Belongs to the bacterial ribosomal protein bL12 family.</text>
</comment>
<keyword id="KW-1185">Reference proteome</keyword>
<keyword id="KW-0687">Ribonucleoprotein</keyword>
<keyword id="KW-0689">Ribosomal protein</keyword>
<proteinExistence type="inferred from homology"/>